<evidence type="ECO:0000255" key="1">
    <source>
        <dbReference type="HAMAP-Rule" id="MF_00750"/>
    </source>
</evidence>
<reference key="1">
    <citation type="journal article" date="2014" name="Stand. Genomic Sci.">
        <title>Complete genome sequence of Burkholderia phymatum STM815(T), a broad host range and efficient nitrogen-fixing symbiont of Mimosa species.</title>
        <authorList>
            <person name="Moulin L."/>
            <person name="Klonowska A."/>
            <person name="Caroline B."/>
            <person name="Booth K."/>
            <person name="Vriezen J.A."/>
            <person name="Melkonian R."/>
            <person name="James E.K."/>
            <person name="Young J.P."/>
            <person name="Bena G."/>
            <person name="Hauser L."/>
            <person name="Land M."/>
            <person name="Kyrpides N."/>
            <person name="Bruce D."/>
            <person name="Chain P."/>
            <person name="Copeland A."/>
            <person name="Pitluck S."/>
            <person name="Woyke T."/>
            <person name="Lizotte-Waniewski M."/>
            <person name="Bristow J."/>
            <person name="Riley M."/>
        </authorList>
    </citation>
    <scope>NUCLEOTIDE SEQUENCE [LARGE SCALE GENOMIC DNA]</scope>
    <source>
        <strain>DSM 17167 / CIP 108236 / LMG 21445 / STM815</strain>
    </source>
</reference>
<dbReference type="EC" id="1.1.99.1" evidence="1"/>
<dbReference type="EC" id="1.2.1.8" evidence="1"/>
<dbReference type="EMBL" id="CP001044">
    <property type="protein sequence ID" value="ACC72466.1"/>
    <property type="molecule type" value="Genomic_DNA"/>
</dbReference>
<dbReference type="RefSeq" id="WP_012402639.1">
    <property type="nucleotide sequence ID" value="NC_010623.1"/>
</dbReference>
<dbReference type="SMR" id="B2JS89"/>
<dbReference type="STRING" id="391038.Bphy_3310"/>
<dbReference type="CAZy" id="AA3">
    <property type="family name" value="Auxiliary Activities 3"/>
</dbReference>
<dbReference type="KEGG" id="bph:Bphy_3310"/>
<dbReference type="eggNOG" id="COG2303">
    <property type="taxonomic scope" value="Bacteria"/>
</dbReference>
<dbReference type="HOGENOM" id="CLU_002865_7_1_4"/>
<dbReference type="OrthoDB" id="9785276at2"/>
<dbReference type="UniPathway" id="UPA00529">
    <property type="reaction ID" value="UER00385"/>
</dbReference>
<dbReference type="Proteomes" id="UP000001192">
    <property type="component" value="Chromosome 2"/>
</dbReference>
<dbReference type="GO" id="GO:0016020">
    <property type="term" value="C:membrane"/>
    <property type="evidence" value="ECO:0007669"/>
    <property type="project" value="TreeGrafter"/>
</dbReference>
<dbReference type="GO" id="GO:0008802">
    <property type="term" value="F:betaine-aldehyde dehydrogenase (NAD+) activity"/>
    <property type="evidence" value="ECO:0007669"/>
    <property type="project" value="UniProtKB-EC"/>
</dbReference>
<dbReference type="GO" id="GO:0008812">
    <property type="term" value="F:choline dehydrogenase activity"/>
    <property type="evidence" value="ECO:0007669"/>
    <property type="project" value="UniProtKB-UniRule"/>
</dbReference>
<dbReference type="GO" id="GO:0050660">
    <property type="term" value="F:flavin adenine dinucleotide binding"/>
    <property type="evidence" value="ECO:0007669"/>
    <property type="project" value="InterPro"/>
</dbReference>
<dbReference type="GO" id="GO:0019285">
    <property type="term" value="P:glycine betaine biosynthetic process from choline"/>
    <property type="evidence" value="ECO:0007669"/>
    <property type="project" value="UniProtKB-UniRule"/>
</dbReference>
<dbReference type="Gene3D" id="3.50.50.60">
    <property type="entry name" value="FAD/NAD(P)-binding domain"/>
    <property type="match status" value="1"/>
</dbReference>
<dbReference type="Gene3D" id="3.30.560.10">
    <property type="entry name" value="Glucose Oxidase, domain 3"/>
    <property type="match status" value="1"/>
</dbReference>
<dbReference type="HAMAP" id="MF_00750">
    <property type="entry name" value="Choline_dehydrogen"/>
    <property type="match status" value="1"/>
</dbReference>
<dbReference type="InterPro" id="IPR011533">
    <property type="entry name" value="BetA"/>
</dbReference>
<dbReference type="InterPro" id="IPR036188">
    <property type="entry name" value="FAD/NAD-bd_sf"/>
</dbReference>
<dbReference type="InterPro" id="IPR012132">
    <property type="entry name" value="GMC_OxRdtase"/>
</dbReference>
<dbReference type="InterPro" id="IPR000172">
    <property type="entry name" value="GMC_OxRdtase_N"/>
</dbReference>
<dbReference type="InterPro" id="IPR007867">
    <property type="entry name" value="GMC_OxRtase_C"/>
</dbReference>
<dbReference type="NCBIfam" id="TIGR01810">
    <property type="entry name" value="betA"/>
    <property type="match status" value="1"/>
</dbReference>
<dbReference type="NCBIfam" id="NF002550">
    <property type="entry name" value="PRK02106.1"/>
    <property type="match status" value="1"/>
</dbReference>
<dbReference type="PANTHER" id="PTHR11552:SF147">
    <property type="entry name" value="CHOLINE DEHYDROGENASE, MITOCHONDRIAL"/>
    <property type="match status" value="1"/>
</dbReference>
<dbReference type="PANTHER" id="PTHR11552">
    <property type="entry name" value="GLUCOSE-METHANOL-CHOLINE GMC OXIDOREDUCTASE"/>
    <property type="match status" value="1"/>
</dbReference>
<dbReference type="Pfam" id="PF05199">
    <property type="entry name" value="GMC_oxred_C"/>
    <property type="match status" value="1"/>
</dbReference>
<dbReference type="Pfam" id="PF00732">
    <property type="entry name" value="GMC_oxred_N"/>
    <property type="match status" value="1"/>
</dbReference>
<dbReference type="PIRSF" id="PIRSF000137">
    <property type="entry name" value="Alcohol_oxidase"/>
    <property type="match status" value="1"/>
</dbReference>
<dbReference type="SUPFAM" id="SSF54373">
    <property type="entry name" value="FAD-linked reductases, C-terminal domain"/>
    <property type="match status" value="1"/>
</dbReference>
<dbReference type="SUPFAM" id="SSF51905">
    <property type="entry name" value="FAD/NAD(P)-binding domain"/>
    <property type="match status" value="1"/>
</dbReference>
<dbReference type="PROSITE" id="PS00623">
    <property type="entry name" value="GMC_OXRED_1"/>
    <property type="match status" value="1"/>
</dbReference>
<dbReference type="PROSITE" id="PS00624">
    <property type="entry name" value="GMC_OXRED_2"/>
    <property type="match status" value="1"/>
</dbReference>
<sequence length="572" mass="63110">MAAKEYDYIIIGAGSAGNVLATRLTEDRDVTVLLLEAGGPDYRFDFRTQMPAALAYPLQGRRYNWAYETDPEPFMNNRRMECGRGKGLGGSSLINGMCYIRGNALDYDGWAERKGLENWTYLDCLPYFRKAETRDAGANDYHGGDGPVHVTTSKRGVNPLFEAMVEAGVQAGYPRTDDLNGYQQEGFGPMDRTVTANGRRASTARGYLDQARPRPNLTIVTYATTDRILFSGKRAQGVVYLDGQAQITAHARREVLLCSGAIASPQILQRSGVGPGGWLRDLDIPVVLDLPGVGQNLQDHLEMYMQYECKEPVSLYPALLLRNQPAIGIEWMLKGTGIGASNHFEAGGFIRTRDDDPWPNIQYHFLPVAINYNGTNAIKMHGFQAHVGSMRSPSRGRVKLRSRDPREHPSILFNYMAEALDWREFRDAIRITREIIAQPALDRFRGRELSPGAELQSDAQIDAFVRARAETAYHPSCSCAMGYDDMAVVDGEGRVHGLEGLRVVDASIMPRITTGNLNAPTIMLAEKIADRIRGRAPLARSTAPYYVANGAPARGAKHVEHAPAPSVAAHTH</sequence>
<comment type="function">
    <text evidence="1">Involved in the biosynthesis of the osmoprotectant glycine betaine. Catalyzes the oxidation of choline to betaine aldehyde and betaine aldehyde to glycine betaine at the same rate.</text>
</comment>
<comment type="catalytic activity">
    <reaction evidence="1">
        <text>choline + A = betaine aldehyde + AH2</text>
        <dbReference type="Rhea" id="RHEA:17433"/>
        <dbReference type="ChEBI" id="CHEBI:13193"/>
        <dbReference type="ChEBI" id="CHEBI:15354"/>
        <dbReference type="ChEBI" id="CHEBI:15710"/>
        <dbReference type="ChEBI" id="CHEBI:17499"/>
        <dbReference type="EC" id="1.1.99.1"/>
    </reaction>
</comment>
<comment type="catalytic activity">
    <reaction evidence="1">
        <text>betaine aldehyde + NAD(+) + H2O = glycine betaine + NADH + 2 H(+)</text>
        <dbReference type="Rhea" id="RHEA:15305"/>
        <dbReference type="ChEBI" id="CHEBI:15377"/>
        <dbReference type="ChEBI" id="CHEBI:15378"/>
        <dbReference type="ChEBI" id="CHEBI:15710"/>
        <dbReference type="ChEBI" id="CHEBI:17750"/>
        <dbReference type="ChEBI" id="CHEBI:57540"/>
        <dbReference type="ChEBI" id="CHEBI:57945"/>
        <dbReference type="EC" id="1.2.1.8"/>
    </reaction>
</comment>
<comment type="cofactor">
    <cofactor evidence="1">
        <name>FAD</name>
        <dbReference type="ChEBI" id="CHEBI:57692"/>
    </cofactor>
</comment>
<comment type="pathway">
    <text evidence="1">Amine and polyamine biosynthesis; betaine biosynthesis via choline pathway; betaine aldehyde from choline (cytochrome c reductase route): step 1/1.</text>
</comment>
<comment type="similarity">
    <text evidence="1">Belongs to the GMC oxidoreductase family.</text>
</comment>
<organism>
    <name type="scientific">Paraburkholderia phymatum (strain DSM 17167 / CIP 108236 / LMG 21445 / STM815)</name>
    <name type="common">Burkholderia phymatum</name>
    <dbReference type="NCBI Taxonomy" id="391038"/>
    <lineage>
        <taxon>Bacteria</taxon>
        <taxon>Pseudomonadati</taxon>
        <taxon>Pseudomonadota</taxon>
        <taxon>Betaproteobacteria</taxon>
        <taxon>Burkholderiales</taxon>
        <taxon>Burkholderiaceae</taxon>
        <taxon>Paraburkholderia</taxon>
    </lineage>
</organism>
<feature type="chain" id="PRO_1000133324" description="Oxygen-dependent choline dehydrogenase">
    <location>
        <begin position="1"/>
        <end position="572"/>
    </location>
</feature>
<feature type="active site" description="Proton acceptor" evidence="1">
    <location>
        <position position="474"/>
    </location>
</feature>
<feature type="binding site" evidence="1">
    <location>
        <begin position="7"/>
        <end position="36"/>
    </location>
    <ligand>
        <name>FAD</name>
        <dbReference type="ChEBI" id="CHEBI:57692"/>
    </ligand>
</feature>
<protein>
    <recommendedName>
        <fullName evidence="1">Oxygen-dependent choline dehydrogenase</fullName>
        <shortName evidence="1">CDH</shortName>
        <shortName evidence="1">CHD</shortName>
        <ecNumber evidence="1">1.1.99.1</ecNumber>
    </recommendedName>
    <alternativeName>
        <fullName evidence="1">Betaine aldehyde dehydrogenase</fullName>
        <shortName evidence="1">BADH</shortName>
        <ecNumber evidence="1">1.2.1.8</ecNumber>
    </alternativeName>
</protein>
<keyword id="KW-0274">FAD</keyword>
<keyword id="KW-0285">Flavoprotein</keyword>
<keyword id="KW-0520">NAD</keyword>
<keyword id="KW-0560">Oxidoreductase</keyword>
<keyword id="KW-1185">Reference proteome</keyword>
<name>BETA_PARP8</name>
<accession>B2JS89</accession>
<gene>
    <name evidence="1" type="primary">betA</name>
    <name type="ordered locus">Bphy_3310</name>
</gene>
<proteinExistence type="inferred from homology"/>